<accession>Q8DFD8</accession>
<gene>
    <name evidence="1" type="primary">rlmH</name>
    <name type="ordered locus">VV1_0277</name>
</gene>
<reference key="1">
    <citation type="submission" date="2002-12" db="EMBL/GenBank/DDBJ databases">
        <title>Complete genome sequence of Vibrio vulnificus CMCP6.</title>
        <authorList>
            <person name="Rhee J.H."/>
            <person name="Kim S.Y."/>
            <person name="Chung S.S."/>
            <person name="Kim J.J."/>
            <person name="Moon Y.H."/>
            <person name="Jeong H."/>
            <person name="Choy H.E."/>
        </authorList>
    </citation>
    <scope>NUCLEOTIDE SEQUENCE [LARGE SCALE GENOMIC DNA]</scope>
    <source>
        <strain>CMCP6</strain>
    </source>
</reference>
<evidence type="ECO:0000255" key="1">
    <source>
        <dbReference type="HAMAP-Rule" id="MF_00658"/>
    </source>
</evidence>
<protein>
    <recommendedName>
        <fullName evidence="1">Ribosomal RNA large subunit methyltransferase H</fullName>
        <ecNumber evidence="1">2.1.1.177</ecNumber>
    </recommendedName>
    <alternativeName>
        <fullName evidence="1">23S rRNA (pseudouridine1915-N3)-methyltransferase</fullName>
    </alternativeName>
    <alternativeName>
        <fullName evidence="1">23S rRNA m3Psi1915 methyltransferase</fullName>
    </alternativeName>
    <alternativeName>
        <fullName evidence="1">rRNA (pseudouridine-N3-)-methyltransferase RlmH</fullName>
    </alternativeName>
</protein>
<keyword id="KW-0963">Cytoplasm</keyword>
<keyword id="KW-0489">Methyltransferase</keyword>
<keyword id="KW-0698">rRNA processing</keyword>
<keyword id="KW-0949">S-adenosyl-L-methionine</keyword>
<keyword id="KW-0808">Transferase</keyword>
<proteinExistence type="inferred from homology"/>
<comment type="function">
    <text evidence="1">Specifically methylates the pseudouridine at position 1915 (m3Psi1915) in 23S rRNA.</text>
</comment>
<comment type="catalytic activity">
    <reaction evidence="1">
        <text>pseudouridine(1915) in 23S rRNA + S-adenosyl-L-methionine = N(3)-methylpseudouridine(1915) in 23S rRNA + S-adenosyl-L-homocysteine + H(+)</text>
        <dbReference type="Rhea" id="RHEA:42752"/>
        <dbReference type="Rhea" id="RHEA-COMP:10221"/>
        <dbReference type="Rhea" id="RHEA-COMP:10222"/>
        <dbReference type="ChEBI" id="CHEBI:15378"/>
        <dbReference type="ChEBI" id="CHEBI:57856"/>
        <dbReference type="ChEBI" id="CHEBI:59789"/>
        <dbReference type="ChEBI" id="CHEBI:65314"/>
        <dbReference type="ChEBI" id="CHEBI:74486"/>
        <dbReference type="EC" id="2.1.1.177"/>
    </reaction>
</comment>
<comment type="subunit">
    <text evidence="1">Homodimer.</text>
</comment>
<comment type="subcellular location">
    <subcellularLocation>
        <location evidence="1">Cytoplasm</location>
    </subcellularLocation>
</comment>
<comment type="similarity">
    <text evidence="1">Belongs to the RNA methyltransferase RlmH family.</text>
</comment>
<name>RLMH_VIBVU</name>
<organism>
    <name type="scientific">Vibrio vulnificus (strain CMCP6)</name>
    <dbReference type="NCBI Taxonomy" id="216895"/>
    <lineage>
        <taxon>Bacteria</taxon>
        <taxon>Pseudomonadati</taxon>
        <taxon>Pseudomonadota</taxon>
        <taxon>Gammaproteobacteria</taxon>
        <taxon>Vibrionales</taxon>
        <taxon>Vibrionaceae</taxon>
        <taxon>Vibrio</taxon>
    </lineage>
</organism>
<sequence>MKIQLIAVGTKMPKWVEEGFQEYRRRFPHDMPLELIEITAGKRGKNADIARILQKEGEAMLAAIPKGNRIVTLDIPGKKWDTPELAQQLEAWKLDGRDVSILIGGPEGLAPACKAAAEQSWSLSALTLPHPLVRIVMAESLYRAWSITTNHPYHRE</sequence>
<feature type="chain" id="PRO_0000198209" description="Ribosomal RNA large subunit methyltransferase H">
    <location>
        <begin position="1"/>
        <end position="156"/>
    </location>
</feature>
<feature type="binding site" evidence="1">
    <location>
        <position position="73"/>
    </location>
    <ligand>
        <name>S-adenosyl-L-methionine</name>
        <dbReference type="ChEBI" id="CHEBI:59789"/>
    </ligand>
</feature>
<feature type="binding site" evidence="1">
    <location>
        <position position="104"/>
    </location>
    <ligand>
        <name>S-adenosyl-L-methionine</name>
        <dbReference type="ChEBI" id="CHEBI:59789"/>
    </ligand>
</feature>
<feature type="binding site" evidence="1">
    <location>
        <begin position="123"/>
        <end position="128"/>
    </location>
    <ligand>
        <name>S-adenosyl-L-methionine</name>
        <dbReference type="ChEBI" id="CHEBI:59789"/>
    </ligand>
</feature>
<dbReference type="EC" id="2.1.1.177" evidence="1"/>
<dbReference type="EMBL" id="AE016795">
    <property type="protein sequence ID" value="AAO08810.2"/>
    <property type="molecule type" value="Genomic_DNA"/>
</dbReference>
<dbReference type="RefSeq" id="WP_011078385.1">
    <property type="nucleotide sequence ID" value="NC_004459.3"/>
</dbReference>
<dbReference type="SMR" id="Q8DFD8"/>
<dbReference type="GeneID" id="93894618"/>
<dbReference type="KEGG" id="vvu:VV1_0277"/>
<dbReference type="HOGENOM" id="CLU_100552_1_0_6"/>
<dbReference type="Proteomes" id="UP000002275">
    <property type="component" value="Chromosome 1"/>
</dbReference>
<dbReference type="GO" id="GO:0005737">
    <property type="term" value="C:cytoplasm"/>
    <property type="evidence" value="ECO:0007669"/>
    <property type="project" value="UniProtKB-SubCell"/>
</dbReference>
<dbReference type="GO" id="GO:0070038">
    <property type="term" value="F:rRNA (pseudouridine-N3-)-methyltransferase activity"/>
    <property type="evidence" value="ECO:0007669"/>
    <property type="project" value="UniProtKB-UniRule"/>
</dbReference>
<dbReference type="CDD" id="cd18081">
    <property type="entry name" value="RlmH-like"/>
    <property type="match status" value="1"/>
</dbReference>
<dbReference type="Gene3D" id="3.40.1280.10">
    <property type="match status" value="1"/>
</dbReference>
<dbReference type="HAMAP" id="MF_00658">
    <property type="entry name" value="23SrRNA_methyltr_H"/>
    <property type="match status" value="1"/>
</dbReference>
<dbReference type="InterPro" id="IPR029028">
    <property type="entry name" value="Alpha/beta_knot_MTases"/>
</dbReference>
<dbReference type="InterPro" id="IPR003742">
    <property type="entry name" value="RlmH-like"/>
</dbReference>
<dbReference type="InterPro" id="IPR029026">
    <property type="entry name" value="tRNA_m1G_MTases_N"/>
</dbReference>
<dbReference type="NCBIfam" id="NF000984">
    <property type="entry name" value="PRK00103.1-1"/>
    <property type="match status" value="1"/>
</dbReference>
<dbReference type="NCBIfam" id="NF000986">
    <property type="entry name" value="PRK00103.1-4"/>
    <property type="match status" value="1"/>
</dbReference>
<dbReference type="NCBIfam" id="TIGR00246">
    <property type="entry name" value="tRNA_RlmH_YbeA"/>
    <property type="match status" value="1"/>
</dbReference>
<dbReference type="PANTHER" id="PTHR33603">
    <property type="entry name" value="METHYLTRANSFERASE"/>
    <property type="match status" value="1"/>
</dbReference>
<dbReference type="PANTHER" id="PTHR33603:SF1">
    <property type="entry name" value="RIBOSOMAL RNA LARGE SUBUNIT METHYLTRANSFERASE H"/>
    <property type="match status" value="1"/>
</dbReference>
<dbReference type="Pfam" id="PF02590">
    <property type="entry name" value="SPOUT_MTase"/>
    <property type="match status" value="1"/>
</dbReference>
<dbReference type="PIRSF" id="PIRSF004505">
    <property type="entry name" value="MT_bac"/>
    <property type="match status" value="1"/>
</dbReference>
<dbReference type="SUPFAM" id="SSF75217">
    <property type="entry name" value="alpha/beta knot"/>
    <property type="match status" value="1"/>
</dbReference>